<protein>
    <recommendedName>
        <fullName>Protein transport protein Sec61 subunit alpha</fullName>
    </recommendedName>
    <alternativeName>
        <fullName>Secretory 61 complex subunit alpha</fullName>
    </alternativeName>
</protein>
<comment type="function">
    <text evidence="1">Appears to play a crucial role in the insertion of secretory and membrane polypeptides into the ER. It is required for assembly of membrane and secretory proteins. Found to be tightly associated with membrane-bound ribosomes, either directly or through adaptor proteins (By similarity).</text>
</comment>
<comment type="subunit">
    <text evidence="1">Heterotrimeric complex composed of SEC61-alpha, SEC61-beta and SEC61-gamma.</text>
</comment>
<comment type="subcellular location">
    <subcellularLocation>
        <location evidence="1">Endoplasmic reticulum membrane</location>
        <topology evidence="1">Multi-pass membrane protein</topology>
    </subcellularLocation>
</comment>
<comment type="similarity">
    <text evidence="3">Belongs to the SecY/SEC61-alpha family.</text>
</comment>
<reference key="1">
    <citation type="journal article" date="2005" name="Nature">
        <title>The genome of the social amoeba Dictyostelium discoideum.</title>
        <authorList>
            <person name="Eichinger L."/>
            <person name="Pachebat J.A."/>
            <person name="Gloeckner G."/>
            <person name="Rajandream M.A."/>
            <person name="Sucgang R."/>
            <person name="Berriman M."/>
            <person name="Song J."/>
            <person name="Olsen R."/>
            <person name="Szafranski K."/>
            <person name="Xu Q."/>
            <person name="Tunggal B."/>
            <person name="Kummerfeld S."/>
            <person name="Madera M."/>
            <person name="Konfortov B.A."/>
            <person name="Rivero F."/>
            <person name="Bankier A.T."/>
            <person name="Lehmann R."/>
            <person name="Hamlin N."/>
            <person name="Davies R."/>
            <person name="Gaudet P."/>
            <person name="Fey P."/>
            <person name="Pilcher K."/>
            <person name="Chen G."/>
            <person name="Saunders D."/>
            <person name="Sodergren E.J."/>
            <person name="Davis P."/>
            <person name="Kerhornou A."/>
            <person name="Nie X."/>
            <person name="Hall N."/>
            <person name="Anjard C."/>
            <person name="Hemphill L."/>
            <person name="Bason N."/>
            <person name="Farbrother P."/>
            <person name="Desany B."/>
            <person name="Just E."/>
            <person name="Morio T."/>
            <person name="Rost R."/>
            <person name="Churcher C.M."/>
            <person name="Cooper J."/>
            <person name="Haydock S."/>
            <person name="van Driessche N."/>
            <person name="Cronin A."/>
            <person name="Goodhead I."/>
            <person name="Muzny D.M."/>
            <person name="Mourier T."/>
            <person name="Pain A."/>
            <person name="Lu M."/>
            <person name="Harper D."/>
            <person name="Lindsay R."/>
            <person name="Hauser H."/>
            <person name="James K.D."/>
            <person name="Quiles M."/>
            <person name="Madan Babu M."/>
            <person name="Saito T."/>
            <person name="Buchrieser C."/>
            <person name="Wardroper A."/>
            <person name="Felder M."/>
            <person name="Thangavelu M."/>
            <person name="Johnson D."/>
            <person name="Knights A."/>
            <person name="Loulseged H."/>
            <person name="Mungall K.L."/>
            <person name="Oliver K."/>
            <person name="Price C."/>
            <person name="Quail M.A."/>
            <person name="Urushihara H."/>
            <person name="Hernandez J."/>
            <person name="Rabbinowitsch E."/>
            <person name="Steffen D."/>
            <person name="Sanders M."/>
            <person name="Ma J."/>
            <person name="Kohara Y."/>
            <person name="Sharp S."/>
            <person name="Simmonds M.N."/>
            <person name="Spiegler S."/>
            <person name="Tivey A."/>
            <person name="Sugano S."/>
            <person name="White B."/>
            <person name="Walker D."/>
            <person name="Woodward J.R."/>
            <person name="Winckler T."/>
            <person name="Tanaka Y."/>
            <person name="Shaulsky G."/>
            <person name="Schleicher M."/>
            <person name="Weinstock G.M."/>
            <person name="Rosenthal A."/>
            <person name="Cox E.C."/>
            <person name="Chisholm R.L."/>
            <person name="Gibbs R.A."/>
            <person name="Loomis W.F."/>
            <person name="Platzer M."/>
            <person name="Kay R.R."/>
            <person name="Williams J.G."/>
            <person name="Dear P.H."/>
            <person name="Noegel A.A."/>
            <person name="Barrell B.G."/>
            <person name="Kuspa A."/>
        </authorList>
    </citation>
    <scope>NUCLEOTIDE SEQUENCE [LARGE SCALE GENOMIC DNA]</scope>
    <source>
        <strain>AX4</strain>
    </source>
</reference>
<accession>Q54XK2</accession>
<sequence>MGFRFLDIVKPFTSLVPEVGQPDRKIPFREKVLWTAICLFIFLVCSQIPLYGIRSTDSSDPFYWAKVIMASNRGTLMELGISPIVTSGMVMQLLAGAKLIEIDQSVKADRDLFSAAQKLFGMLICVGQGVAYIWSGSYGDPAVLGFGNCFLIVLQLFFAGIIVMLLDELLQKGYGIGSGISLFIATNICETIVWKTFSPTTVSVGKGTEFEGAVIALFHLLLTRNDKVRALKEAFYRQNLPNITNLLATVLIFMVVIYFQGFRVDLPVKSTRVSGQQGTYPIKLFYTSNIPIILQSALVSNLYFISQLLYRRFPDNILVNLFGAWRTSEYSQQMIPVSGLTYYISSPNNMSAVLADPFHALFYITFMLTSCALFSKVWIEVSGSSARDVAKQLKDQQMTMKGHRDTSVIKELNRYIPTAAAFGGLCIGALTVVADFMGAIGSGTGILLAVTIIYQYFETFVKEQQELSGGIGGLF</sequence>
<organism>
    <name type="scientific">Dictyostelium discoideum</name>
    <name type="common">Social amoeba</name>
    <dbReference type="NCBI Taxonomy" id="44689"/>
    <lineage>
        <taxon>Eukaryota</taxon>
        <taxon>Amoebozoa</taxon>
        <taxon>Evosea</taxon>
        <taxon>Eumycetozoa</taxon>
        <taxon>Dictyostelia</taxon>
        <taxon>Dictyosteliales</taxon>
        <taxon>Dictyosteliaceae</taxon>
        <taxon>Dictyostelium</taxon>
    </lineage>
</organism>
<proteinExistence type="inferred from homology"/>
<name>SC61A_DICDI</name>
<keyword id="KW-0256">Endoplasmic reticulum</keyword>
<keyword id="KW-0472">Membrane</keyword>
<keyword id="KW-0653">Protein transport</keyword>
<keyword id="KW-1185">Reference proteome</keyword>
<keyword id="KW-0811">Translocation</keyword>
<keyword id="KW-0812">Transmembrane</keyword>
<keyword id="KW-1133">Transmembrane helix</keyword>
<keyword id="KW-0813">Transport</keyword>
<evidence type="ECO:0000250" key="1"/>
<evidence type="ECO:0000255" key="2"/>
<evidence type="ECO:0000305" key="3"/>
<dbReference type="EMBL" id="AAFI02000024">
    <property type="protein sequence ID" value="EAL68044.1"/>
    <property type="molecule type" value="Genomic_DNA"/>
</dbReference>
<dbReference type="RefSeq" id="XP_647801.1">
    <property type="nucleotide sequence ID" value="XM_642709.1"/>
</dbReference>
<dbReference type="SMR" id="Q54XK2"/>
<dbReference type="FunCoup" id="Q54XK2">
    <property type="interactions" value="748"/>
</dbReference>
<dbReference type="STRING" id="44689.Q54XK2"/>
<dbReference type="PaxDb" id="44689-DDB0235193"/>
<dbReference type="EnsemblProtists" id="EAL68044">
    <property type="protein sequence ID" value="EAL68044"/>
    <property type="gene ID" value="DDB_G0278885"/>
</dbReference>
<dbReference type="GeneID" id="8621759"/>
<dbReference type="KEGG" id="ddi:DDB_G0278885"/>
<dbReference type="dictyBase" id="DDB_G0278885">
    <property type="gene designation" value="sec61a"/>
</dbReference>
<dbReference type="VEuPathDB" id="AmoebaDB:DDB_G0278885"/>
<dbReference type="eggNOG" id="KOG1373">
    <property type="taxonomic scope" value="Eukaryota"/>
</dbReference>
<dbReference type="HOGENOM" id="CLU_031763_2_0_1"/>
<dbReference type="InParanoid" id="Q54XK2"/>
<dbReference type="OMA" id="PMMRQMF"/>
<dbReference type="PhylomeDB" id="Q54XK2"/>
<dbReference type="PRO" id="PR:Q54XK2"/>
<dbReference type="Proteomes" id="UP000002195">
    <property type="component" value="Chromosome 3"/>
</dbReference>
<dbReference type="GO" id="GO:0005783">
    <property type="term" value="C:endoplasmic reticulum"/>
    <property type="evidence" value="ECO:0000250"/>
    <property type="project" value="UniProtKB"/>
</dbReference>
<dbReference type="GO" id="GO:0005784">
    <property type="term" value="C:Sec61 translocon complex"/>
    <property type="evidence" value="ECO:0000318"/>
    <property type="project" value="GO_Central"/>
</dbReference>
<dbReference type="GO" id="GO:0008320">
    <property type="term" value="F:protein transmembrane transporter activity"/>
    <property type="evidence" value="ECO:0000318"/>
    <property type="project" value="GO_Central"/>
</dbReference>
<dbReference type="GO" id="GO:0015450">
    <property type="term" value="F:protein-transporting ATPase activity"/>
    <property type="evidence" value="ECO:0000250"/>
    <property type="project" value="UniProtKB"/>
</dbReference>
<dbReference type="GO" id="GO:0043022">
    <property type="term" value="F:ribosome binding"/>
    <property type="evidence" value="ECO:0000318"/>
    <property type="project" value="GO_Central"/>
</dbReference>
<dbReference type="GO" id="GO:0005048">
    <property type="term" value="F:signal sequence binding"/>
    <property type="evidence" value="ECO:0000318"/>
    <property type="project" value="GO_Central"/>
</dbReference>
<dbReference type="GO" id="GO:0031204">
    <property type="term" value="P:post-translational protein targeting to membrane, translocation"/>
    <property type="evidence" value="ECO:0000250"/>
    <property type="project" value="UniProtKB"/>
</dbReference>
<dbReference type="GO" id="GO:0006616">
    <property type="term" value="P:SRP-dependent cotranslational protein targeting to membrane, translocation"/>
    <property type="evidence" value="ECO:0000318"/>
    <property type="project" value="GO_Central"/>
</dbReference>
<dbReference type="FunFam" id="1.10.3370.10:FF:000002">
    <property type="entry name" value="Transport Sec61 subunit alpha isoform 2"/>
    <property type="match status" value="1"/>
</dbReference>
<dbReference type="Gene3D" id="1.10.3370.10">
    <property type="entry name" value="SecY subunit domain"/>
    <property type="match status" value="1"/>
</dbReference>
<dbReference type="InterPro" id="IPR002208">
    <property type="entry name" value="SecY/SEC61-alpha"/>
</dbReference>
<dbReference type="InterPro" id="IPR030659">
    <property type="entry name" value="SecY_CS"/>
</dbReference>
<dbReference type="InterPro" id="IPR023201">
    <property type="entry name" value="SecY_dom_sf"/>
</dbReference>
<dbReference type="InterPro" id="IPR019561">
    <property type="entry name" value="Translocon_Sec61/SecY_plug_dom"/>
</dbReference>
<dbReference type="NCBIfam" id="TIGR00967">
    <property type="entry name" value="3a0501s007"/>
    <property type="match status" value="1"/>
</dbReference>
<dbReference type="NCBIfam" id="NF006341">
    <property type="entry name" value="PRK08568.1-5"/>
    <property type="match status" value="1"/>
</dbReference>
<dbReference type="PANTHER" id="PTHR10906">
    <property type="entry name" value="SECY/SEC61-ALPHA FAMILY MEMBER"/>
    <property type="match status" value="1"/>
</dbReference>
<dbReference type="Pfam" id="PF10559">
    <property type="entry name" value="Plug_translocon"/>
    <property type="match status" value="1"/>
</dbReference>
<dbReference type="Pfam" id="PF00344">
    <property type="entry name" value="SecY"/>
    <property type="match status" value="1"/>
</dbReference>
<dbReference type="PIRSF" id="PIRSF004557">
    <property type="entry name" value="SecY"/>
    <property type="match status" value="1"/>
</dbReference>
<dbReference type="SUPFAM" id="SSF103491">
    <property type="entry name" value="Preprotein translocase SecY subunit"/>
    <property type="match status" value="1"/>
</dbReference>
<dbReference type="PROSITE" id="PS00755">
    <property type="entry name" value="SECY_1"/>
    <property type="match status" value="1"/>
</dbReference>
<dbReference type="PROSITE" id="PS00756">
    <property type="entry name" value="SECY_2"/>
    <property type="match status" value="1"/>
</dbReference>
<feature type="chain" id="PRO_0000328185" description="Protein transport protein Sec61 subunit alpha">
    <location>
        <begin position="1"/>
        <end position="475"/>
    </location>
</feature>
<feature type="topological domain" description="Cytoplasmic" evidence="2">
    <location>
        <begin position="1"/>
        <end position="32"/>
    </location>
</feature>
<feature type="transmembrane region" description="Helical" evidence="2">
    <location>
        <begin position="33"/>
        <end position="53"/>
    </location>
</feature>
<feature type="topological domain" description="Lumenal" evidence="2">
    <location>
        <begin position="54"/>
        <end position="75"/>
    </location>
</feature>
<feature type="transmembrane region" description="Helical" evidence="2">
    <location>
        <begin position="76"/>
        <end position="96"/>
    </location>
</feature>
<feature type="topological domain" description="Cytoplasmic" evidence="2">
    <location>
        <begin position="97"/>
        <end position="118"/>
    </location>
</feature>
<feature type="transmembrane region" description="Helical" evidence="2">
    <location>
        <begin position="119"/>
        <end position="139"/>
    </location>
</feature>
<feature type="topological domain" description="Lumenal" evidence="2">
    <location>
        <begin position="140"/>
        <end position="145"/>
    </location>
</feature>
<feature type="transmembrane region" description="Helical" evidence="2">
    <location>
        <begin position="146"/>
        <end position="166"/>
    </location>
</feature>
<feature type="topological domain" description="Cytoplasmic" evidence="2">
    <location>
        <begin position="167"/>
        <end position="173"/>
    </location>
</feature>
<feature type="transmembrane region" description="Helical" evidence="2">
    <location>
        <begin position="174"/>
        <end position="194"/>
    </location>
</feature>
<feature type="topological domain" description="Lumenal" evidence="2">
    <location>
        <begin position="195"/>
        <end position="241"/>
    </location>
</feature>
<feature type="transmembrane region" description="Helical" evidence="2">
    <location>
        <begin position="242"/>
        <end position="262"/>
    </location>
</feature>
<feature type="topological domain" description="Cytoplasmic" evidence="2">
    <location>
        <begin position="263"/>
        <end position="289"/>
    </location>
</feature>
<feature type="transmembrane region" description="Helical" evidence="2">
    <location>
        <begin position="290"/>
        <end position="310"/>
    </location>
</feature>
<feature type="topological domain" description="Lumenal" evidence="2">
    <location>
        <begin position="311"/>
        <end position="353"/>
    </location>
</feature>
<feature type="transmembrane region" description="Helical" evidence="2">
    <location>
        <begin position="354"/>
        <end position="374"/>
    </location>
</feature>
<feature type="topological domain" description="Cytoplasmic" evidence="2">
    <location>
        <begin position="375"/>
        <end position="411"/>
    </location>
</feature>
<feature type="transmembrane region" description="Helical" evidence="2">
    <location>
        <begin position="412"/>
        <end position="434"/>
    </location>
</feature>
<feature type="topological domain" description="Lumenal" evidence="2">
    <location>
        <begin position="435"/>
        <end position="440"/>
    </location>
</feature>
<feature type="transmembrane region" description="Helical" evidence="2">
    <location>
        <begin position="441"/>
        <end position="461"/>
    </location>
</feature>
<feature type="topological domain" description="Cytoplasmic" evidence="2">
    <location>
        <begin position="462"/>
        <end position="475"/>
    </location>
</feature>
<gene>
    <name type="primary">sec61a</name>
    <name type="ORF">DDB_G0278885</name>
</gene>